<comment type="function">
    <text evidence="2">Destroys superoxide anion radicals which are normally produced within the cells and which are toxic to biological systems. Catalyzes the dismutation of superoxide anion radicals into O2 and H2O2 by successive reduction and oxidation of the transition metal ion at the active site.</text>
</comment>
<comment type="catalytic activity">
    <reaction evidence="2">
        <text>2 superoxide + 2 H(+) = H2O2 + O2</text>
        <dbReference type="Rhea" id="RHEA:20696"/>
        <dbReference type="ChEBI" id="CHEBI:15378"/>
        <dbReference type="ChEBI" id="CHEBI:15379"/>
        <dbReference type="ChEBI" id="CHEBI:16240"/>
        <dbReference type="ChEBI" id="CHEBI:18421"/>
        <dbReference type="EC" id="1.15.1.1"/>
    </reaction>
    <physiologicalReaction direction="left-to-right" evidence="7">
        <dbReference type="Rhea" id="RHEA:20697"/>
    </physiologicalReaction>
</comment>
<comment type="cofactor">
    <cofactor evidence="2 4 5">
        <name>Mn(2+)</name>
        <dbReference type="ChEBI" id="CHEBI:29035"/>
    </cofactor>
    <cofactor evidence="1 2 4 5">
        <name>Fe(3+)</name>
        <dbReference type="ChEBI" id="CHEBI:29034"/>
    </cofactor>
    <text evidence="1 5">Binds 1 Mn(2+) or Fe(3+) ion per subunit.</text>
</comment>
<comment type="activity regulation">
    <text evidence="2 4">Shows decreasing activity with increasing pH (PubMed:7575431). Slightly inhibited by azide and fluoride at pH 7-8; the inhibition is drastically increased towards lower pH (PubMed:9531477).</text>
</comment>
<comment type="biophysicochemical properties">
    <kinetics>
        <KM evidence="2">0.54 mM for superoxide (at pH 9.5, with the Fe-SOD form)</KM>
    </kinetics>
</comment>
<comment type="subunit">
    <text evidence="3">Homotetramer.</text>
</comment>
<comment type="similarity">
    <text evidence="6">Belongs to the iron/manganese superoxide dismutase family.</text>
</comment>
<keyword id="KW-0002">3D-structure</keyword>
<keyword id="KW-0903">Direct protein sequencing</keyword>
<keyword id="KW-0408">Iron</keyword>
<keyword id="KW-0464">Manganese</keyword>
<keyword id="KW-0479">Metal-binding</keyword>
<keyword id="KW-0560">Oxidoreductase</keyword>
<organism>
    <name type="scientific">Propionibacterium freudenreichii subsp. shermanii</name>
    <dbReference type="NCBI Taxonomy" id="1752"/>
    <lineage>
        <taxon>Bacteria</taxon>
        <taxon>Bacillati</taxon>
        <taxon>Actinomycetota</taxon>
        <taxon>Actinomycetes</taxon>
        <taxon>Propionibacteriales</taxon>
        <taxon>Propionibacteriaceae</taxon>
        <taxon>Propionibacterium</taxon>
    </lineage>
</organism>
<evidence type="ECO:0000269" key="1">
    <source>
    </source>
</evidence>
<evidence type="ECO:0000269" key="2">
    <source>
    </source>
</evidence>
<evidence type="ECO:0000269" key="3">
    <source>
    </source>
</evidence>
<evidence type="ECO:0000269" key="4">
    <source>
    </source>
</evidence>
<evidence type="ECO:0000269" key="5">
    <source ref="4"/>
</evidence>
<evidence type="ECO:0000305" key="6"/>
<evidence type="ECO:0000305" key="7">
    <source>
    </source>
</evidence>
<evidence type="ECO:0007744" key="8">
    <source>
        <dbReference type="PDB" id="1AR4"/>
    </source>
</evidence>
<evidence type="ECO:0007744" key="9">
    <source>
        <dbReference type="PDB" id="1AR5"/>
    </source>
</evidence>
<evidence type="ECO:0007744" key="10">
    <source>
        <dbReference type="PDB" id="1BS3"/>
    </source>
</evidence>
<evidence type="ECO:0007744" key="11">
    <source>
        <dbReference type="PDB" id="1BSM"/>
    </source>
</evidence>
<evidence type="ECO:0007744" key="12">
    <source>
        <dbReference type="PDB" id="1BT8"/>
    </source>
</evidence>
<evidence type="ECO:0007829" key="13">
    <source>
        <dbReference type="PDB" id="1BSM"/>
    </source>
</evidence>
<evidence type="ECO:0007829" key="14">
    <source>
        <dbReference type="PDB" id="1BT8"/>
    </source>
</evidence>
<dbReference type="EC" id="1.15.1.1" evidence="2"/>
<dbReference type="PIR" id="JC4396">
    <property type="entry name" value="JC4396"/>
</dbReference>
<dbReference type="PDB" id="1AR4">
    <property type="method" value="X-ray"/>
    <property type="resolution" value="1.90 A"/>
    <property type="chains" value="A/B=1-201"/>
</dbReference>
<dbReference type="PDB" id="1AR5">
    <property type="method" value="X-ray"/>
    <property type="resolution" value="1.60 A"/>
    <property type="chains" value="A/B=1-201"/>
</dbReference>
<dbReference type="PDB" id="1AVM">
    <property type="method" value="X-ray"/>
    <property type="resolution" value="1.55 A"/>
    <property type="chains" value="A/B=1-201"/>
</dbReference>
<dbReference type="PDB" id="1BS3">
    <property type="method" value="X-ray"/>
    <property type="resolution" value="1.55 A"/>
    <property type="chains" value="A/B=1-201"/>
</dbReference>
<dbReference type="PDB" id="1BSM">
    <property type="method" value="X-ray"/>
    <property type="resolution" value="1.35 A"/>
    <property type="chains" value="A/B=1-201"/>
</dbReference>
<dbReference type="PDB" id="1BT8">
    <property type="method" value="X-ray"/>
    <property type="resolution" value="1.85 A"/>
    <property type="chains" value="A/B=1-201"/>
</dbReference>
<dbReference type="PDBsum" id="1AR4"/>
<dbReference type="PDBsum" id="1AR5"/>
<dbReference type="PDBsum" id="1AVM"/>
<dbReference type="PDBsum" id="1BS3"/>
<dbReference type="PDBsum" id="1BSM"/>
<dbReference type="PDBsum" id="1BT8"/>
<dbReference type="SMR" id="P80293"/>
<dbReference type="EvolutionaryTrace" id="P80293"/>
<dbReference type="GO" id="GO:0046872">
    <property type="term" value="F:metal ion binding"/>
    <property type="evidence" value="ECO:0007669"/>
    <property type="project" value="UniProtKB-KW"/>
</dbReference>
<dbReference type="GO" id="GO:0004784">
    <property type="term" value="F:superoxide dismutase activity"/>
    <property type="evidence" value="ECO:0007669"/>
    <property type="project" value="UniProtKB-EC"/>
</dbReference>
<dbReference type="FunFam" id="1.10.287.990:FF:000001">
    <property type="entry name" value="Superoxide dismutase"/>
    <property type="match status" value="1"/>
</dbReference>
<dbReference type="FunFam" id="3.55.40.20:FF:000004">
    <property type="entry name" value="Superoxide dismutase [Fe]"/>
    <property type="match status" value="1"/>
</dbReference>
<dbReference type="Gene3D" id="1.10.287.990">
    <property type="entry name" value="Fe,Mn superoxide dismutase (SOD) domain"/>
    <property type="match status" value="1"/>
</dbReference>
<dbReference type="Gene3D" id="3.55.40.20">
    <property type="entry name" value="Iron/manganese superoxide dismutase, C-terminal domain"/>
    <property type="match status" value="1"/>
</dbReference>
<dbReference type="InterPro" id="IPR050265">
    <property type="entry name" value="Fe/Mn_Superoxide_Dismutase"/>
</dbReference>
<dbReference type="InterPro" id="IPR001189">
    <property type="entry name" value="Mn/Fe_SOD"/>
</dbReference>
<dbReference type="InterPro" id="IPR019833">
    <property type="entry name" value="Mn/Fe_SOD_BS"/>
</dbReference>
<dbReference type="InterPro" id="IPR019832">
    <property type="entry name" value="Mn/Fe_SOD_C"/>
</dbReference>
<dbReference type="InterPro" id="IPR019831">
    <property type="entry name" value="Mn/Fe_SOD_N"/>
</dbReference>
<dbReference type="InterPro" id="IPR036324">
    <property type="entry name" value="Mn/Fe_SOD_N_sf"/>
</dbReference>
<dbReference type="InterPro" id="IPR036314">
    <property type="entry name" value="SOD_C_sf"/>
</dbReference>
<dbReference type="PANTHER" id="PTHR11404">
    <property type="entry name" value="SUPEROXIDE DISMUTASE 2"/>
    <property type="match status" value="1"/>
</dbReference>
<dbReference type="PANTHER" id="PTHR11404:SF6">
    <property type="entry name" value="SUPEROXIDE DISMUTASE [MN], MITOCHONDRIAL"/>
    <property type="match status" value="1"/>
</dbReference>
<dbReference type="Pfam" id="PF02777">
    <property type="entry name" value="Sod_Fe_C"/>
    <property type="match status" value="1"/>
</dbReference>
<dbReference type="Pfam" id="PF00081">
    <property type="entry name" value="Sod_Fe_N"/>
    <property type="match status" value="1"/>
</dbReference>
<dbReference type="PIRSF" id="PIRSF000349">
    <property type="entry name" value="SODismutase"/>
    <property type="match status" value="1"/>
</dbReference>
<dbReference type="PRINTS" id="PR01703">
    <property type="entry name" value="MNSODISMTASE"/>
</dbReference>
<dbReference type="SUPFAM" id="SSF54719">
    <property type="entry name" value="Fe,Mn superoxide dismutase (SOD), C-terminal domain"/>
    <property type="match status" value="1"/>
</dbReference>
<dbReference type="SUPFAM" id="SSF46609">
    <property type="entry name" value="Fe,Mn superoxide dismutase (SOD), N-terminal domain"/>
    <property type="match status" value="1"/>
</dbReference>
<dbReference type="PROSITE" id="PS00088">
    <property type="entry name" value="SOD_MN"/>
    <property type="match status" value="1"/>
</dbReference>
<name>SODM_PROFR</name>
<gene>
    <name type="primary">sodA</name>
</gene>
<protein>
    <recommendedName>
        <fullName>Superoxide dismutase [Mn/Fe]</fullName>
        <ecNumber evidence="2">1.15.1.1</ecNumber>
    </recommendedName>
</protein>
<reference key="1">
    <citation type="journal article" date="1994" name="Eur. J. Biochem.">
        <title>In vivo incorporation of copper into the iron-exchangeable and manganese-exchangeable superoxide dismutase from Propionibacterium shermanii. Amino acid sequence and identity of the protein moieties.</title>
        <authorList>
            <person name="Meier B."/>
            <person name="Sehn A.P."/>
            <person name="Schinina M.E."/>
            <person name="Barra D."/>
        </authorList>
    </citation>
    <scope>PROTEIN SEQUENCE</scope>
    <scope>SUBUNIT</scope>
    <source>
        <strain>PZ3</strain>
    </source>
</reference>
<reference key="2">
    <citation type="journal article" date="1995" name="Biochem. J.">
        <title>Kinetic and spectroscopic studies on a superoxide dismutase from Propionibacterium shermanii that is active with iron or manganese: pH-dependence.</title>
        <authorList>
            <person name="Meier B."/>
            <person name="Michel C."/>
            <person name="Saran M."/>
            <person name="Huettermann J."/>
            <person name="Parak F."/>
            <person name="Rotilio G."/>
        </authorList>
    </citation>
    <scope>FUNCTION</scope>
    <scope>CATALYTIC ACTIVITY</scope>
    <scope>COFACTOR</scope>
    <scope>BIOPHYSICOCHEMICAL PROPERTIES</scope>
    <scope>ACTIVITY REGULATION</scope>
    <source>
        <strain>PZ3</strain>
    </source>
</reference>
<reference key="3">
    <citation type="journal article" date="1998" name="Biochem. J.">
        <title>pH-dependent inhibition by azide and fluoride of the iron superoxide dismutase from Propionibacterium shermanii.</title>
        <authorList>
            <person name="Meier B."/>
            <person name="Scherk C."/>
            <person name="Schmidt M."/>
            <person name="Parak F."/>
        </authorList>
    </citation>
    <scope>COFACTOR</scope>
    <scope>ACTIVITY REGULATION</scope>
    <source>
        <strain>PZ3</strain>
    </source>
</reference>
<reference evidence="8 9" key="4">
    <citation type="journal article" date="1996" name="J. Biol. Inorg. Chem.">
        <title>X-ray structure of the cambialistic superoxide dismutase from Propionibacterium shermanii active with Fe or Mn.</title>
        <authorList>
            <person name="Schmidt M."/>
            <person name="Meier B."/>
            <person name="Parak F."/>
        </authorList>
    </citation>
    <scope>X-RAY CRYSTALLOGRAPHY (1.6 ANGSTROMS) IN COMPLEX WITH IRON AND MANGANESE</scope>
    <scope>COFACTOR</scope>
    <source>
        <strain>PZ3</strain>
    </source>
</reference>
<reference evidence="10 11 12" key="5">
    <citation type="journal article" date="1999" name="Eur. J. Biochem.">
        <title>Manipulating the coordination mumber of the ferric iron within the cambialistic superoxide dismutase of Propionibacterium shermanii by changing the pH-value. A crystallographic analysis.</title>
        <authorList>
            <person name="Schmidt M."/>
        </authorList>
    </citation>
    <scope>X-RAY CRYSTALLOGRAPHY (1.35 ANGSTROMS) IN COMPLEX WITH IRON</scope>
    <scope>COFACTOR</scope>
</reference>
<feature type="chain" id="PRO_0000160066" description="Superoxide dismutase [Mn/Fe]">
    <location>
        <begin position="1"/>
        <end position="201"/>
    </location>
</feature>
<feature type="binding site" evidence="9 10 11 12">
    <location>
        <position position="27"/>
    </location>
    <ligand>
        <name>Fe(3+)</name>
        <dbReference type="ChEBI" id="CHEBI:29034"/>
    </ligand>
</feature>
<feature type="binding site" evidence="8">
    <location>
        <position position="27"/>
    </location>
    <ligand>
        <name>Mn(2+)</name>
        <dbReference type="ChEBI" id="CHEBI:29035"/>
    </ligand>
</feature>
<feature type="binding site" evidence="9 10 11 12">
    <location>
        <position position="75"/>
    </location>
    <ligand>
        <name>Fe(3+)</name>
        <dbReference type="ChEBI" id="CHEBI:29034"/>
    </ligand>
</feature>
<feature type="binding site" evidence="8">
    <location>
        <position position="75"/>
    </location>
    <ligand>
        <name>Mn(2+)</name>
        <dbReference type="ChEBI" id="CHEBI:29035"/>
    </ligand>
</feature>
<feature type="binding site" evidence="9 10 11 12">
    <location>
        <position position="161"/>
    </location>
    <ligand>
        <name>Fe(3+)</name>
        <dbReference type="ChEBI" id="CHEBI:29034"/>
    </ligand>
</feature>
<feature type="binding site" evidence="8">
    <location>
        <position position="161"/>
    </location>
    <ligand>
        <name>Mn(2+)</name>
        <dbReference type="ChEBI" id="CHEBI:29035"/>
    </ligand>
</feature>
<feature type="binding site" evidence="9 10 12">
    <location>
        <position position="165"/>
    </location>
    <ligand>
        <name>Fe(3+)</name>
        <dbReference type="ChEBI" id="CHEBI:29034"/>
    </ligand>
</feature>
<feature type="binding site" evidence="8">
    <location>
        <position position="165"/>
    </location>
    <ligand>
        <name>Mn(2+)</name>
        <dbReference type="ChEBI" id="CHEBI:29035"/>
    </ligand>
</feature>
<feature type="turn" evidence="13">
    <location>
        <begin position="12"/>
        <end position="18"/>
    </location>
</feature>
<feature type="helix" evidence="13">
    <location>
        <begin position="21"/>
        <end position="29"/>
    </location>
</feature>
<feature type="helix" evidence="13">
    <location>
        <begin position="31"/>
        <end position="52"/>
    </location>
</feature>
<feature type="helix" evidence="13">
    <location>
        <begin position="58"/>
        <end position="80"/>
    </location>
</feature>
<feature type="helix" evidence="13">
    <location>
        <begin position="94"/>
        <end position="104"/>
    </location>
</feature>
<feature type="helix" evidence="13">
    <location>
        <begin position="107"/>
        <end position="119"/>
    </location>
</feature>
<feature type="strand" evidence="13">
    <location>
        <begin position="122"/>
        <end position="132"/>
    </location>
</feature>
<feature type="turn" evidence="13">
    <location>
        <begin position="133"/>
        <end position="136"/>
    </location>
</feature>
<feature type="strand" evidence="13">
    <location>
        <begin position="137"/>
        <end position="144"/>
    </location>
</feature>
<feature type="turn" evidence="13">
    <location>
        <begin position="145"/>
        <end position="147"/>
    </location>
</feature>
<feature type="strand" evidence="13">
    <location>
        <begin position="155"/>
        <end position="161"/>
    </location>
</feature>
<feature type="helix" evidence="13">
    <location>
        <begin position="164"/>
        <end position="166"/>
    </location>
</feature>
<feature type="helix" evidence="13">
    <location>
        <begin position="168"/>
        <end position="171"/>
    </location>
</feature>
<feature type="helix" evidence="13">
    <location>
        <begin position="175"/>
        <end position="183"/>
    </location>
</feature>
<feature type="helix" evidence="13">
    <location>
        <begin position="188"/>
        <end position="197"/>
    </location>
</feature>
<feature type="turn" evidence="14">
    <location>
        <begin position="198"/>
        <end position="200"/>
    </location>
</feature>
<accession>P80293</accession>
<sequence>AVYTLPELPYDYSALEPYISGEIMELHHDKHHKAYVDGANTALDKLAEARDKADFGAINKLEKDLAFNLAGHVNHSVFWKNMAPKGSAPERPTDELGAAIDEFFGSFDNMKAQFTAAATGIQGSGWASLVWDPLGKRINTLQFYDHQNNLPAGSIPLLQLDMWEHAFYLQYKNVKGDYVKSWWNVVNWDDVALRFSEARVA</sequence>
<proteinExistence type="evidence at protein level"/>